<evidence type="ECO:0000255" key="1">
    <source>
        <dbReference type="HAMAP-Rule" id="MF_00435"/>
    </source>
</evidence>
<evidence type="ECO:0000255" key="2">
    <source>
        <dbReference type="PROSITE-ProRule" id="PRU01197"/>
    </source>
</evidence>
<evidence type="ECO:0000255" key="3">
    <source>
        <dbReference type="PROSITE-ProRule" id="PRU01198"/>
    </source>
</evidence>
<keyword id="KW-0028">Amino-acid biosynthesis</keyword>
<keyword id="KW-0100">Branched-chain amino acid biosynthesis</keyword>
<keyword id="KW-0460">Magnesium</keyword>
<keyword id="KW-0479">Metal-binding</keyword>
<keyword id="KW-0521">NADP</keyword>
<keyword id="KW-0560">Oxidoreductase</keyword>
<keyword id="KW-1185">Reference proteome</keyword>
<keyword id="KW-0677">Repeat</keyword>
<comment type="function">
    <text evidence="1">Involved in the biosynthesis of branched-chain amino acids (BCAA). Catalyzes an alkyl-migration followed by a ketol-acid reduction of (S)-2-acetolactate (S2AL) to yield (R)-2,3-dihydroxy-isovalerate. In the isomerase reaction, S2AL is rearranged via a Mg-dependent methyl migration to produce 3-hydroxy-3-methyl-2-ketobutyrate (HMKB). In the reductase reaction, this 2-ketoacid undergoes a metal-dependent reduction by NADPH to yield (R)-2,3-dihydroxy-isovalerate.</text>
</comment>
<comment type="catalytic activity">
    <reaction evidence="1">
        <text>(2R)-2,3-dihydroxy-3-methylbutanoate + NADP(+) = (2S)-2-acetolactate + NADPH + H(+)</text>
        <dbReference type="Rhea" id="RHEA:22068"/>
        <dbReference type="ChEBI" id="CHEBI:15378"/>
        <dbReference type="ChEBI" id="CHEBI:49072"/>
        <dbReference type="ChEBI" id="CHEBI:57783"/>
        <dbReference type="ChEBI" id="CHEBI:58349"/>
        <dbReference type="ChEBI" id="CHEBI:58476"/>
        <dbReference type="EC" id="1.1.1.86"/>
    </reaction>
</comment>
<comment type="catalytic activity">
    <reaction evidence="1">
        <text>(2R,3R)-2,3-dihydroxy-3-methylpentanoate + NADP(+) = (S)-2-ethyl-2-hydroxy-3-oxobutanoate + NADPH + H(+)</text>
        <dbReference type="Rhea" id="RHEA:13493"/>
        <dbReference type="ChEBI" id="CHEBI:15378"/>
        <dbReference type="ChEBI" id="CHEBI:49256"/>
        <dbReference type="ChEBI" id="CHEBI:49258"/>
        <dbReference type="ChEBI" id="CHEBI:57783"/>
        <dbReference type="ChEBI" id="CHEBI:58349"/>
        <dbReference type="EC" id="1.1.1.86"/>
    </reaction>
</comment>
<comment type="cofactor">
    <cofactor evidence="1">
        <name>Mg(2+)</name>
        <dbReference type="ChEBI" id="CHEBI:18420"/>
    </cofactor>
    <text evidence="1">Binds 2 magnesium ions per subunit.</text>
</comment>
<comment type="pathway">
    <text evidence="1">Amino-acid biosynthesis; L-isoleucine biosynthesis; L-isoleucine from 2-oxobutanoate: step 2/4.</text>
</comment>
<comment type="pathway">
    <text evidence="1">Amino-acid biosynthesis; L-valine biosynthesis; L-valine from pyruvate: step 2/4.</text>
</comment>
<comment type="similarity">
    <text evidence="1">Belongs to the ketol-acid reductoisomerase family.</text>
</comment>
<gene>
    <name evidence="1" type="primary">ilvC</name>
    <name type="ordered locus">SARI_03745</name>
</gene>
<feature type="chain" id="PRO_1000080643" description="Ketol-acid reductoisomerase (NADP(+))">
    <location>
        <begin position="1"/>
        <end position="491"/>
    </location>
</feature>
<feature type="domain" description="KARI N-terminal Rossmann" evidence="2">
    <location>
        <begin position="15"/>
        <end position="208"/>
    </location>
</feature>
<feature type="domain" description="KARI C-terminal knotted 1" evidence="3">
    <location>
        <begin position="209"/>
        <end position="344"/>
    </location>
</feature>
<feature type="domain" description="KARI C-terminal knotted 2" evidence="3">
    <location>
        <begin position="345"/>
        <end position="484"/>
    </location>
</feature>
<feature type="active site" evidence="1">
    <location>
        <position position="132"/>
    </location>
</feature>
<feature type="binding site" evidence="1">
    <location>
        <begin position="45"/>
        <end position="48"/>
    </location>
    <ligand>
        <name>NADP(+)</name>
        <dbReference type="ChEBI" id="CHEBI:58349"/>
    </ligand>
</feature>
<feature type="binding site" evidence="1">
    <location>
        <position position="68"/>
    </location>
    <ligand>
        <name>NADP(+)</name>
        <dbReference type="ChEBI" id="CHEBI:58349"/>
    </ligand>
</feature>
<feature type="binding site" evidence="1">
    <location>
        <position position="76"/>
    </location>
    <ligand>
        <name>NADP(+)</name>
        <dbReference type="ChEBI" id="CHEBI:58349"/>
    </ligand>
</feature>
<feature type="binding site" evidence="1">
    <location>
        <position position="78"/>
    </location>
    <ligand>
        <name>NADP(+)</name>
        <dbReference type="ChEBI" id="CHEBI:58349"/>
    </ligand>
</feature>
<feature type="binding site" evidence="1">
    <location>
        <begin position="108"/>
        <end position="110"/>
    </location>
    <ligand>
        <name>NADP(+)</name>
        <dbReference type="ChEBI" id="CHEBI:58349"/>
    </ligand>
</feature>
<feature type="binding site" evidence="1">
    <location>
        <position position="158"/>
    </location>
    <ligand>
        <name>NADP(+)</name>
        <dbReference type="ChEBI" id="CHEBI:58349"/>
    </ligand>
</feature>
<feature type="binding site" evidence="1">
    <location>
        <position position="217"/>
    </location>
    <ligand>
        <name>Mg(2+)</name>
        <dbReference type="ChEBI" id="CHEBI:18420"/>
        <label>1</label>
    </ligand>
</feature>
<feature type="binding site" evidence="1">
    <location>
        <position position="217"/>
    </location>
    <ligand>
        <name>Mg(2+)</name>
        <dbReference type="ChEBI" id="CHEBI:18420"/>
        <label>2</label>
    </ligand>
</feature>
<feature type="binding site" evidence="1">
    <location>
        <position position="221"/>
    </location>
    <ligand>
        <name>Mg(2+)</name>
        <dbReference type="ChEBI" id="CHEBI:18420"/>
        <label>1</label>
    </ligand>
</feature>
<feature type="binding site" evidence="1">
    <location>
        <position position="389"/>
    </location>
    <ligand>
        <name>Mg(2+)</name>
        <dbReference type="ChEBI" id="CHEBI:18420"/>
        <label>2</label>
    </ligand>
</feature>
<feature type="binding site" evidence="1">
    <location>
        <position position="393"/>
    </location>
    <ligand>
        <name>Mg(2+)</name>
        <dbReference type="ChEBI" id="CHEBI:18420"/>
        <label>2</label>
    </ligand>
</feature>
<feature type="binding site" evidence="1">
    <location>
        <position position="414"/>
    </location>
    <ligand>
        <name>substrate</name>
    </ligand>
</feature>
<accession>A9MJN4</accession>
<dbReference type="EC" id="1.1.1.86" evidence="1"/>
<dbReference type="EMBL" id="CP000880">
    <property type="protein sequence ID" value="ABX23545.1"/>
    <property type="molecule type" value="Genomic_DNA"/>
</dbReference>
<dbReference type="SMR" id="A9MJN4"/>
<dbReference type="STRING" id="41514.SARI_03745"/>
<dbReference type="KEGG" id="ses:SARI_03745"/>
<dbReference type="HOGENOM" id="CLU_551905_0_0_6"/>
<dbReference type="UniPathway" id="UPA00047">
    <property type="reaction ID" value="UER00056"/>
</dbReference>
<dbReference type="UniPathway" id="UPA00049">
    <property type="reaction ID" value="UER00060"/>
</dbReference>
<dbReference type="Proteomes" id="UP000002084">
    <property type="component" value="Chromosome"/>
</dbReference>
<dbReference type="GO" id="GO:0005829">
    <property type="term" value="C:cytosol"/>
    <property type="evidence" value="ECO:0007669"/>
    <property type="project" value="TreeGrafter"/>
</dbReference>
<dbReference type="GO" id="GO:0004455">
    <property type="term" value="F:ketol-acid reductoisomerase activity"/>
    <property type="evidence" value="ECO:0007669"/>
    <property type="project" value="UniProtKB-UniRule"/>
</dbReference>
<dbReference type="GO" id="GO:0000287">
    <property type="term" value="F:magnesium ion binding"/>
    <property type="evidence" value="ECO:0007669"/>
    <property type="project" value="UniProtKB-UniRule"/>
</dbReference>
<dbReference type="GO" id="GO:0009097">
    <property type="term" value="P:isoleucine biosynthetic process"/>
    <property type="evidence" value="ECO:0007669"/>
    <property type="project" value="UniProtKB-UniRule"/>
</dbReference>
<dbReference type="GO" id="GO:0009099">
    <property type="term" value="P:L-valine biosynthetic process"/>
    <property type="evidence" value="ECO:0007669"/>
    <property type="project" value="UniProtKB-UniRule"/>
</dbReference>
<dbReference type="FunFam" id="1.10.1040.10:FF:000007">
    <property type="entry name" value="Ketol-acid reductoisomerase (NADP(+))"/>
    <property type="match status" value="1"/>
</dbReference>
<dbReference type="FunFam" id="3.40.50.720:FF:000043">
    <property type="entry name" value="Ketol-acid reductoisomerase (NADP(+))"/>
    <property type="match status" value="1"/>
</dbReference>
<dbReference type="Gene3D" id="1.10.1040.10">
    <property type="entry name" value="N-(1-d-carboxylethyl)-l-norvaline Dehydrogenase, domain 2"/>
    <property type="match status" value="1"/>
</dbReference>
<dbReference type="Gene3D" id="3.40.50.720">
    <property type="entry name" value="NAD(P)-binding Rossmann-like Domain"/>
    <property type="match status" value="1"/>
</dbReference>
<dbReference type="HAMAP" id="MF_00435">
    <property type="entry name" value="IlvC"/>
    <property type="match status" value="1"/>
</dbReference>
<dbReference type="InterPro" id="IPR008927">
    <property type="entry name" value="6-PGluconate_DH-like_C_sf"/>
</dbReference>
<dbReference type="InterPro" id="IPR013328">
    <property type="entry name" value="6PGD_dom2"/>
</dbReference>
<dbReference type="InterPro" id="IPR013023">
    <property type="entry name" value="KARI"/>
</dbReference>
<dbReference type="InterPro" id="IPR000506">
    <property type="entry name" value="KARI_C"/>
</dbReference>
<dbReference type="InterPro" id="IPR013116">
    <property type="entry name" value="KARI_N"/>
</dbReference>
<dbReference type="InterPro" id="IPR036291">
    <property type="entry name" value="NAD(P)-bd_dom_sf"/>
</dbReference>
<dbReference type="NCBIfam" id="TIGR00465">
    <property type="entry name" value="ilvC"/>
    <property type="match status" value="1"/>
</dbReference>
<dbReference type="NCBIfam" id="NF003557">
    <property type="entry name" value="PRK05225.1"/>
    <property type="match status" value="1"/>
</dbReference>
<dbReference type="PANTHER" id="PTHR21371">
    <property type="entry name" value="KETOL-ACID REDUCTOISOMERASE, MITOCHONDRIAL"/>
    <property type="match status" value="1"/>
</dbReference>
<dbReference type="PANTHER" id="PTHR21371:SF1">
    <property type="entry name" value="KETOL-ACID REDUCTOISOMERASE, MITOCHONDRIAL"/>
    <property type="match status" value="1"/>
</dbReference>
<dbReference type="Pfam" id="PF01450">
    <property type="entry name" value="KARI_C"/>
    <property type="match status" value="2"/>
</dbReference>
<dbReference type="Pfam" id="PF07991">
    <property type="entry name" value="KARI_N"/>
    <property type="match status" value="1"/>
</dbReference>
<dbReference type="SUPFAM" id="SSF48179">
    <property type="entry name" value="6-phosphogluconate dehydrogenase C-terminal domain-like"/>
    <property type="match status" value="2"/>
</dbReference>
<dbReference type="SUPFAM" id="SSF51735">
    <property type="entry name" value="NAD(P)-binding Rossmann-fold domains"/>
    <property type="match status" value="1"/>
</dbReference>
<dbReference type="PROSITE" id="PS51851">
    <property type="entry name" value="KARI_C"/>
    <property type="match status" value="2"/>
</dbReference>
<dbReference type="PROSITE" id="PS51850">
    <property type="entry name" value="KARI_N"/>
    <property type="match status" value="1"/>
</dbReference>
<reference key="1">
    <citation type="submission" date="2007-11" db="EMBL/GenBank/DDBJ databases">
        <authorList>
            <consortium name="The Salmonella enterica serovar Arizonae Genome Sequencing Project"/>
            <person name="McClelland M."/>
            <person name="Sanderson E.K."/>
            <person name="Porwollik S."/>
            <person name="Spieth J."/>
            <person name="Clifton W.S."/>
            <person name="Fulton R."/>
            <person name="Chunyan W."/>
            <person name="Wollam A."/>
            <person name="Shah N."/>
            <person name="Pepin K."/>
            <person name="Bhonagiri V."/>
            <person name="Nash W."/>
            <person name="Johnson M."/>
            <person name="Thiruvilangam P."/>
            <person name="Wilson R."/>
        </authorList>
    </citation>
    <scope>NUCLEOTIDE SEQUENCE [LARGE SCALE GENOMIC DNA]</scope>
    <source>
        <strain>ATCC BAA-731 / CDC346-86 / RSK2980</strain>
    </source>
</reference>
<sequence>MANYFNTLNLRQQLAQLGKCRFMGRDEFADGASYLQGKKVVIVGCGAQGLNQGLNMRDSGLDISYALRKEAIAEKRASWRKATENGFKVGTYEELIPQADLVINLTPDKQHSDVVRSVQPLMKDGAALGYSHGFNIVEVGEQIRKDITVVMVAPKCPGTEVREEYKRGFGVPTLIAVHPENDPKGEGMAIAKAWAAATGGHRAGVLESSFVAEVKSDLMGEQTILCGMLQAGSLLCFDKLVEEGTDPAYAEKLIQFGWETITEALKQGGITLMMDRLSNPAKLRAYALSEQLKAIMAPLFQKHMDDIISGEFSSGMMADWANDDKKLLTWREETGKTAFETAPQYEGKIGEQEYFDKGVLMIAMVKAGVELAFETMVDSGIIEESAYYESLHELPLIANTIARKRLYEMNVVISDTAEYGNYLFSYACVPLLKPFMAELQPGDLGKAIAEGSVDNAQLRDVNDAIRSHAIEKVGQKLRGYMTDMKRIAVAG</sequence>
<organism>
    <name type="scientific">Salmonella arizonae (strain ATCC BAA-731 / CDC346-86 / RSK2980)</name>
    <dbReference type="NCBI Taxonomy" id="41514"/>
    <lineage>
        <taxon>Bacteria</taxon>
        <taxon>Pseudomonadati</taxon>
        <taxon>Pseudomonadota</taxon>
        <taxon>Gammaproteobacteria</taxon>
        <taxon>Enterobacterales</taxon>
        <taxon>Enterobacteriaceae</taxon>
        <taxon>Salmonella</taxon>
    </lineage>
</organism>
<proteinExistence type="inferred from homology"/>
<name>ILVC_SALAR</name>
<protein>
    <recommendedName>
        <fullName evidence="1">Ketol-acid reductoisomerase (NADP(+))</fullName>
        <shortName evidence="1">KARI</shortName>
        <ecNumber evidence="1">1.1.1.86</ecNumber>
    </recommendedName>
    <alternativeName>
        <fullName evidence="1">Acetohydroxy-acid isomeroreductase</fullName>
        <shortName evidence="1">AHIR</shortName>
    </alternativeName>
    <alternativeName>
        <fullName evidence="1">Alpha-keto-beta-hydroxylacyl reductoisomerase</fullName>
    </alternativeName>
    <alternativeName>
        <fullName evidence="1">Ketol-acid reductoisomerase type 2</fullName>
    </alternativeName>
    <alternativeName>
        <fullName evidence="1">Ketol-acid reductoisomerase type II</fullName>
    </alternativeName>
</protein>